<gene>
    <name evidence="1" type="primary">ligA</name>
    <name type="ordered locus">CTN_0591</name>
</gene>
<organism>
    <name type="scientific">Thermotoga neapolitana (strain ATCC 49049 / DSM 4359 / NBRC 107923 / NS-E)</name>
    <dbReference type="NCBI Taxonomy" id="309803"/>
    <lineage>
        <taxon>Bacteria</taxon>
        <taxon>Thermotogati</taxon>
        <taxon>Thermotogota</taxon>
        <taxon>Thermotogae</taxon>
        <taxon>Thermotogales</taxon>
        <taxon>Thermotogaceae</taxon>
        <taxon>Thermotoga</taxon>
    </lineage>
</organism>
<accession>B9K734</accession>
<proteinExistence type="inferred from homology"/>
<reference key="1">
    <citation type="submission" date="2007-11" db="EMBL/GenBank/DDBJ databases">
        <title>The genome sequence of the hyperthermophilic bacterium Thermotoga neapolitana.</title>
        <authorList>
            <person name="Lim S.K."/>
            <person name="Kim J.S."/>
            <person name="Cha S.H."/>
            <person name="Park B.C."/>
            <person name="Lee D.S."/>
            <person name="Tae H.S."/>
            <person name="Kim S.-J."/>
            <person name="Kim J.J."/>
            <person name="Park K.J."/>
            <person name="Lee S.Y."/>
        </authorList>
    </citation>
    <scope>NUCLEOTIDE SEQUENCE [LARGE SCALE GENOMIC DNA]</scope>
    <source>
        <strain>ATCC 49049 / DSM 4359 / NBRC 107923 / NS-E</strain>
    </source>
</reference>
<protein>
    <recommendedName>
        <fullName evidence="1">DNA ligase</fullName>
        <ecNumber evidence="1">6.5.1.2</ecNumber>
    </recommendedName>
    <alternativeName>
        <fullName evidence="1">Polydeoxyribonucleotide synthase [NAD(+)]</fullName>
    </alternativeName>
</protein>
<comment type="function">
    <text evidence="1">DNA ligase that catalyzes the formation of phosphodiester linkages between 5'-phosphoryl and 3'-hydroxyl groups in double-stranded DNA using NAD as a coenzyme and as the energy source for the reaction. It is essential for DNA replication and repair of damaged DNA.</text>
</comment>
<comment type="catalytic activity">
    <reaction evidence="1">
        <text>NAD(+) + (deoxyribonucleotide)n-3'-hydroxyl + 5'-phospho-(deoxyribonucleotide)m = (deoxyribonucleotide)n+m + AMP + beta-nicotinamide D-nucleotide.</text>
        <dbReference type="EC" id="6.5.1.2"/>
    </reaction>
</comment>
<comment type="cofactor">
    <cofactor evidence="1">
        <name>Mg(2+)</name>
        <dbReference type="ChEBI" id="CHEBI:18420"/>
    </cofactor>
    <cofactor evidence="1">
        <name>Mn(2+)</name>
        <dbReference type="ChEBI" id="CHEBI:29035"/>
    </cofactor>
</comment>
<comment type="similarity">
    <text evidence="1">Belongs to the NAD-dependent DNA ligase family. LigA subfamily.</text>
</comment>
<sequence length="693" mass="79429">MFRGGEKMRQIPKEVIEEVERLREEIEYHNYRYYVLNDPVITDEEYDRLMRRLIELERMYPELVTPDSPTQRVGGKVLEGFKTVKHSVPMLSLDNTYNEEEIIEFDKRVKKTLQESEVEYVAELKIDGVSIALRYENGRFVLGATRGDGVEGEDVSENVKTIRSVPLRLRKPLTIEVRGEIYMPVDEFKRLNEEREEEGLPPFANPRNAAAGTLRQLNTALVASRRLDSFIYYVVHPENYGLKTQWEALQFLKEIGFKVNPHSRLCKNIQEVIEYWREWKERKRELDYWVDGVVVKVNRFDFQKVLGETSKAPRWAIAFKFPAEQARTRILDVTIQVGRTGVLTPVAELEPVQLAGTIVKRASLHNFEYIREKDIRIGDYVFVEKAGGIIPQIVKSIPELRTGSEKEIKPPQSCPVCGGKVGKLSPDEVAIRCLNPHCPAKLKRALRTFVSREALDIEGLGEKIIDRLVDSGLVKDIADIFYLTPFDLAQLGPGIGQRTIAKILQEIEEAKKRPLHKLITGLGIPMVGQKTAKILAEHFKSLEAIAEASYETLKDIPGIGPEIARSIVEYFRNPKTREIIEKLKKAGVKLEEKTVKYDVLKGLTFAVTGTLKNFTREEIIEFLERLGARVVNSVSKNTDYLIVGENPGSKYEKAKALKVKTMSEEEFLRFVENRAKLKGYNFDEIMRGWKEWS</sequence>
<name>DNLJ_THENN</name>
<keyword id="KW-0227">DNA damage</keyword>
<keyword id="KW-0234">DNA repair</keyword>
<keyword id="KW-0235">DNA replication</keyword>
<keyword id="KW-0436">Ligase</keyword>
<keyword id="KW-0460">Magnesium</keyword>
<keyword id="KW-0464">Manganese</keyword>
<keyword id="KW-0479">Metal-binding</keyword>
<keyword id="KW-0520">NAD</keyword>
<keyword id="KW-0862">Zinc</keyword>
<dbReference type="EC" id="6.5.1.2" evidence="1"/>
<dbReference type="EMBL" id="CP000916">
    <property type="protein sequence ID" value="ACM22767.1"/>
    <property type="molecule type" value="Genomic_DNA"/>
</dbReference>
<dbReference type="SMR" id="B9K734"/>
<dbReference type="STRING" id="309803.CTN_0591"/>
<dbReference type="KEGG" id="tna:CTN_0591"/>
<dbReference type="eggNOG" id="COG0272">
    <property type="taxonomic scope" value="Bacteria"/>
</dbReference>
<dbReference type="HOGENOM" id="CLU_007764_2_1_0"/>
<dbReference type="Proteomes" id="UP000000445">
    <property type="component" value="Chromosome"/>
</dbReference>
<dbReference type="GO" id="GO:0005829">
    <property type="term" value="C:cytosol"/>
    <property type="evidence" value="ECO:0007669"/>
    <property type="project" value="TreeGrafter"/>
</dbReference>
<dbReference type="GO" id="GO:0003677">
    <property type="term" value="F:DNA binding"/>
    <property type="evidence" value="ECO:0007669"/>
    <property type="project" value="InterPro"/>
</dbReference>
<dbReference type="GO" id="GO:0003911">
    <property type="term" value="F:DNA ligase (NAD+) activity"/>
    <property type="evidence" value="ECO:0007669"/>
    <property type="project" value="UniProtKB-UniRule"/>
</dbReference>
<dbReference type="GO" id="GO:0046872">
    <property type="term" value="F:metal ion binding"/>
    <property type="evidence" value="ECO:0007669"/>
    <property type="project" value="UniProtKB-KW"/>
</dbReference>
<dbReference type="GO" id="GO:0006281">
    <property type="term" value="P:DNA repair"/>
    <property type="evidence" value="ECO:0007669"/>
    <property type="project" value="UniProtKB-KW"/>
</dbReference>
<dbReference type="GO" id="GO:0006260">
    <property type="term" value="P:DNA replication"/>
    <property type="evidence" value="ECO:0007669"/>
    <property type="project" value="UniProtKB-KW"/>
</dbReference>
<dbReference type="CDD" id="cd17748">
    <property type="entry name" value="BRCT_DNA_ligase_like"/>
    <property type="match status" value="1"/>
</dbReference>
<dbReference type="CDD" id="cd00114">
    <property type="entry name" value="LIGANc"/>
    <property type="match status" value="1"/>
</dbReference>
<dbReference type="FunFam" id="1.10.150.20:FF:000006">
    <property type="entry name" value="DNA ligase"/>
    <property type="match status" value="1"/>
</dbReference>
<dbReference type="FunFam" id="1.10.150.20:FF:000007">
    <property type="entry name" value="DNA ligase"/>
    <property type="match status" value="1"/>
</dbReference>
<dbReference type="FunFam" id="1.10.287.610:FF:000002">
    <property type="entry name" value="DNA ligase"/>
    <property type="match status" value="1"/>
</dbReference>
<dbReference type="FunFam" id="2.40.50.140:FF:000012">
    <property type="entry name" value="DNA ligase"/>
    <property type="match status" value="1"/>
</dbReference>
<dbReference type="FunFam" id="3.30.470.30:FF:000001">
    <property type="entry name" value="DNA ligase"/>
    <property type="match status" value="1"/>
</dbReference>
<dbReference type="FunFam" id="3.40.50.10190:FF:000086">
    <property type="entry name" value="DNA ligase"/>
    <property type="match status" value="1"/>
</dbReference>
<dbReference type="Gene3D" id="6.20.10.30">
    <property type="match status" value="1"/>
</dbReference>
<dbReference type="Gene3D" id="1.10.150.20">
    <property type="entry name" value="5' to 3' exonuclease, C-terminal subdomain"/>
    <property type="match status" value="2"/>
</dbReference>
<dbReference type="Gene3D" id="3.40.50.10190">
    <property type="entry name" value="BRCT domain"/>
    <property type="match status" value="1"/>
</dbReference>
<dbReference type="Gene3D" id="3.30.470.30">
    <property type="entry name" value="DNA ligase/mRNA capping enzyme"/>
    <property type="match status" value="1"/>
</dbReference>
<dbReference type="Gene3D" id="1.10.287.610">
    <property type="entry name" value="Helix hairpin bin"/>
    <property type="match status" value="1"/>
</dbReference>
<dbReference type="Gene3D" id="2.40.50.140">
    <property type="entry name" value="Nucleic acid-binding proteins"/>
    <property type="match status" value="1"/>
</dbReference>
<dbReference type="HAMAP" id="MF_01588">
    <property type="entry name" value="DNA_ligase_A"/>
    <property type="match status" value="1"/>
</dbReference>
<dbReference type="InterPro" id="IPR001357">
    <property type="entry name" value="BRCT_dom"/>
</dbReference>
<dbReference type="InterPro" id="IPR036420">
    <property type="entry name" value="BRCT_dom_sf"/>
</dbReference>
<dbReference type="InterPro" id="IPR041663">
    <property type="entry name" value="DisA/LigA_HHH"/>
</dbReference>
<dbReference type="InterPro" id="IPR001679">
    <property type="entry name" value="DNA_ligase"/>
</dbReference>
<dbReference type="InterPro" id="IPR018239">
    <property type="entry name" value="DNA_ligase_AS"/>
</dbReference>
<dbReference type="InterPro" id="IPR033136">
    <property type="entry name" value="DNA_ligase_CS"/>
</dbReference>
<dbReference type="InterPro" id="IPR013839">
    <property type="entry name" value="DNAligase_adenylation"/>
</dbReference>
<dbReference type="InterPro" id="IPR013840">
    <property type="entry name" value="DNAligase_N"/>
</dbReference>
<dbReference type="InterPro" id="IPR003583">
    <property type="entry name" value="Hlx-hairpin-Hlx_DNA-bd_motif"/>
</dbReference>
<dbReference type="InterPro" id="IPR012340">
    <property type="entry name" value="NA-bd_OB-fold"/>
</dbReference>
<dbReference type="InterPro" id="IPR004150">
    <property type="entry name" value="NAD_DNA_ligase_OB"/>
</dbReference>
<dbReference type="InterPro" id="IPR010994">
    <property type="entry name" value="RuvA_2-like"/>
</dbReference>
<dbReference type="InterPro" id="IPR004149">
    <property type="entry name" value="Znf_DNAligase_C4"/>
</dbReference>
<dbReference type="NCBIfam" id="TIGR00575">
    <property type="entry name" value="dnlj"/>
    <property type="match status" value="1"/>
</dbReference>
<dbReference type="NCBIfam" id="NF005932">
    <property type="entry name" value="PRK07956.1"/>
    <property type="match status" value="1"/>
</dbReference>
<dbReference type="PANTHER" id="PTHR23389">
    <property type="entry name" value="CHROMOSOME TRANSMISSION FIDELITY FACTOR 18"/>
    <property type="match status" value="1"/>
</dbReference>
<dbReference type="PANTHER" id="PTHR23389:SF9">
    <property type="entry name" value="DNA LIGASE"/>
    <property type="match status" value="1"/>
</dbReference>
<dbReference type="Pfam" id="PF00533">
    <property type="entry name" value="BRCT"/>
    <property type="match status" value="1"/>
</dbReference>
<dbReference type="Pfam" id="PF01653">
    <property type="entry name" value="DNA_ligase_aden"/>
    <property type="match status" value="1"/>
</dbReference>
<dbReference type="Pfam" id="PF03120">
    <property type="entry name" value="DNA_ligase_OB"/>
    <property type="match status" value="1"/>
</dbReference>
<dbReference type="Pfam" id="PF03119">
    <property type="entry name" value="DNA_ligase_ZBD"/>
    <property type="match status" value="1"/>
</dbReference>
<dbReference type="Pfam" id="PF12826">
    <property type="entry name" value="HHH_2"/>
    <property type="match status" value="1"/>
</dbReference>
<dbReference type="Pfam" id="PF14520">
    <property type="entry name" value="HHH_5"/>
    <property type="match status" value="1"/>
</dbReference>
<dbReference type="Pfam" id="PF22745">
    <property type="entry name" value="Nlig-Ia"/>
    <property type="match status" value="1"/>
</dbReference>
<dbReference type="PIRSF" id="PIRSF001604">
    <property type="entry name" value="LigA"/>
    <property type="match status" value="1"/>
</dbReference>
<dbReference type="SMART" id="SM00292">
    <property type="entry name" value="BRCT"/>
    <property type="match status" value="1"/>
</dbReference>
<dbReference type="SMART" id="SM00278">
    <property type="entry name" value="HhH1"/>
    <property type="match status" value="3"/>
</dbReference>
<dbReference type="SMART" id="SM00532">
    <property type="entry name" value="LIGANc"/>
    <property type="match status" value="1"/>
</dbReference>
<dbReference type="SUPFAM" id="SSF52113">
    <property type="entry name" value="BRCT domain"/>
    <property type="match status" value="1"/>
</dbReference>
<dbReference type="SUPFAM" id="SSF56091">
    <property type="entry name" value="DNA ligase/mRNA capping enzyme, catalytic domain"/>
    <property type="match status" value="1"/>
</dbReference>
<dbReference type="SUPFAM" id="SSF50249">
    <property type="entry name" value="Nucleic acid-binding proteins"/>
    <property type="match status" value="1"/>
</dbReference>
<dbReference type="SUPFAM" id="SSF47781">
    <property type="entry name" value="RuvA domain 2-like"/>
    <property type="match status" value="1"/>
</dbReference>
<dbReference type="PROSITE" id="PS50172">
    <property type="entry name" value="BRCT"/>
    <property type="match status" value="1"/>
</dbReference>
<dbReference type="PROSITE" id="PS01055">
    <property type="entry name" value="DNA_LIGASE_N1"/>
    <property type="match status" value="1"/>
</dbReference>
<dbReference type="PROSITE" id="PS01056">
    <property type="entry name" value="DNA_LIGASE_N2"/>
    <property type="match status" value="1"/>
</dbReference>
<evidence type="ECO:0000255" key="1">
    <source>
        <dbReference type="HAMAP-Rule" id="MF_01588"/>
    </source>
</evidence>
<feature type="chain" id="PRO_0000380493" description="DNA ligase">
    <location>
        <begin position="1"/>
        <end position="693"/>
    </location>
</feature>
<feature type="domain" description="BRCT" evidence="1">
    <location>
        <begin position="595"/>
        <end position="684"/>
    </location>
</feature>
<feature type="active site" description="N6-AMP-lysine intermediate" evidence="1">
    <location>
        <position position="125"/>
    </location>
</feature>
<feature type="binding site" evidence="1">
    <location>
        <begin position="43"/>
        <end position="47"/>
    </location>
    <ligand>
        <name>NAD(+)</name>
        <dbReference type="ChEBI" id="CHEBI:57540"/>
    </ligand>
</feature>
<feature type="binding site" evidence="1">
    <location>
        <begin position="92"/>
        <end position="93"/>
    </location>
    <ligand>
        <name>NAD(+)</name>
        <dbReference type="ChEBI" id="CHEBI:57540"/>
    </ligand>
</feature>
<feature type="binding site" evidence="1">
    <location>
        <position position="123"/>
    </location>
    <ligand>
        <name>NAD(+)</name>
        <dbReference type="ChEBI" id="CHEBI:57540"/>
    </ligand>
</feature>
<feature type="binding site" evidence="1">
    <location>
        <position position="146"/>
    </location>
    <ligand>
        <name>NAD(+)</name>
        <dbReference type="ChEBI" id="CHEBI:57540"/>
    </ligand>
</feature>
<feature type="binding site" evidence="1">
    <location>
        <position position="180"/>
    </location>
    <ligand>
        <name>NAD(+)</name>
        <dbReference type="ChEBI" id="CHEBI:57540"/>
    </ligand>
</feature>
<feature type="binding site" evidence="1">
    <location>
        <position position="296"/>
    </location>
    <ligand>
        <name>NAD(+)</name>
        <dbReference type="ChEBI" id="CHEBI:57540"/>
    </ligand>
</feature>
<feature type="binding site" evidence="1">
    <location>
        <position position="320"/>
    </location>
    <ligand>
        <name>NAD(+)</name>
        <dbReference type="ChEBI" id="CHEBI:57540"/>
    </ligand>
</feature>
<feature type="binding site" evidence="1">
    <location>
        <position position="414"/>
    </location>
    <ligand>
        <name>Zn(2+)</name>
        <dbReference type="ChEBI" id="CHEBI:29105"/>
    </ligand>
</feature>
<feature type="binding site" evidence="1">
    <location>
        <position position="417"/>
    </location>
    <ligand>
        <name>Zn(2+)</name>
        <dbReference type="ChEBI" id="CHEBI:29105"/>
    </ligand>
</feature>
<feature type="binding site" evidence="1">
    <location>
        <position position="433"/>
    </location>
    <ligand>
        <name>Zn(2+)</name>
        <dbReference type="ChEBI" id="CHEBI:29105"/>
    </ligand>
</feature>
<feature type="binding site" evidence="1">
    <location>
        <position position="438"/>
    </location>
    <ligand>
        <name>Zn(2+)</name>
        <dbReference type="ChEBI" id="CHEBI:29105"/>
    </ligand>
</feature>